<sequence length="107" mass="12168">MAESHRLYVKGKHLSYQRSKRVNNPNVSLIKIEGVATPQEAQFYLGKRIAYVYRASKEVRGSKIRVMWGKVTRTHGNSGVVRATFRNNLPAKTFGASVRIFLYPSNI</sequence>
<keyword id="KW-0007">Acetylation</keyword>
<keyword id="KW-0963">Cytoplasm</keyword>
<keyword id="KW-0903">Direct protein sequencing</keyword>
<keyword id="KW-1017">Isopeptide bond</keyword>
<keyword id="KW-1185">Reference proteome</keyword>
<keyword id="KW-0687">Ribonucleoprotein</keyword>
<keyword id="KW-0689">Ribosomal protein</keyword>
<keyword id="KW-0832">Ubl conjugation</keyword>
<name>RL33B_YEAST</name>
<proteinExistence type="evidence at protein level"/>
<protein>
    <recommendedName>
        <fullName evidence="6">Large ribosomal subunit protein eL33B</fullName>
    </recommendedName>
    <alternativeName>
        <fullName evidence="7">60S ribosomal protein L33-B</fullName>
    </alternativeName>
    <alternativeName>
        <fullName>L37</fullName>
    </alternativeName>
    <alternativeName>
        <fullName>RP47</fullName>
    </alternativeName>
    <alternativeName>
        <fullName>YL37</fullName>
    </alternativeName>
</protein>
<comment type="function">
    <text evidence="9">Component of the ribosome, a large ribonucleoprotein complex responsible for the synthesis of proteins in the cell. The small ribosomal subunit (SSU) binds messenger RNAs (mRNAs) and translates the encoded message by selecting cognate aminoacyl-transfer RNA (tRNA) molecules. The large subunit (LSU) contains the ribosomal catalytic site termed the peptidyl transferase center (PTC), which catalyzes the formation of peptide bonds, thereby polymerizing the amino acids delivered by tRNAs into a polypeptide chain. The nascent polypeptides leave the ribosome through a tunnel in the LSU and interact with protein factors that function in enzymatic processing, targeting, and the membrane insertion of nascent chains at the exit of the ribosomal tunnel.</text>
</comment>
<comment type="subunit">
    <text evidence="5 10">Component of the large ribosomal subunit (LSU). Mature yeast ribosomes consist of a small (40S) and a large (60S) subunit. The 40S small subunit contains 1 molecule of ribosomal RNA (18S rRNA) and 33 different proteins (encoded by 57 genes). The large 60S subunit contains 3 rRNA molecules (25S, 5.8S and 5S rRNA) and 46 different proteins (encoded by 81 genes) (PubMed:22096102, PubMed:9559554).</text>
</comment>
<comment type="subcellular location">
    <subcellularLocation>
        <location evidence="2 5">Cytoplasm</location>
    </subcellularLocation>
</comment>
<comment type="PTM">
    <text evidence="1">N-terminally acetylated by acetyltransferase NatA.</text>
</comment>
<comment type="miscellaneous">
    <text evidence="3">Present with 65600 molecules/cell in log phase SD medium.</text>
</comment>
<comment type="miscellaneous">
    <text evidence="8">There are 2 genes for eL33 in yeast.</text>
</comment>
<comment type="similarity">
    <text evidence="8">Belongs to the eukaryotic ribosomal protein eL33 family.</text>
</comment>
<gene>
    <name evidence="7" type="primary">RPL33B</name>
    <name type="synonym">RPL37B</name>
    <name type="ordered locus">YOR234C</name>
    <name type="ORF">O5224</name>
</gene>
<organism>
    <name type="scientific">Saccharomyces cerevisiae (strain ATCC 204508 / S288c)</name>
    <name type="common">Baker's yeast</name>
    <dbReference type="NCBI Taxonomy" id="559292"/>
    <lineage>
        <taxon>Eukaryota</taxon>
        <taxon>Fungi</taxon>
        <taxon>Dikarya</taxon>
        <taxon>Ascomycota</taxon>
        <taxon>Saccharomycotina</taxon>
        <taxon>Saccharomycetes</taxon>
        <taxon>Saccharomycetales</taxon>
        <taxon>Saccharomycetaceae</taxon>
        <taxon>Saccharomyces</taxon>
    </lineage>
</organism>
<evidence type="ECO:0000250" key="1">
    <source>
        <dbReference type="UniProtKB" id="P05744"/>
    </source>
</evidence>
<evidence type="ECO:0000269" key="2">
    <source>
    </source>
</evidence>
<evidence type="ECO:0000269" key="3">
    <source>
    </source>
</evidence>
<evidence type="ECO:0000269" key="4">
    <source>
    </source>
</evidence>
<evidence type="ECO:0000269" key="5">
    <source>
    </source>
</evidence>
<evidence type="ECO:0000303" key="6">
    <source>
    </source>
</evidence>
<evidence type="ECO:0000303" key="7">
    <source>
    </source>
</evidence>
<evidence type="ECO:0000305" key="8"/>
<evidence type="ECO:0000305" key="9">
    <source>
    </source>
</evidence>
<evidence type="ECO:0000305" key="10">
    <source>
    </source>
</evidence>
<accession>P41056</accession>
<accession>D6W2T8</accession>
<reference key="1">
    <citation type="journal article" date="1994" name="Curr. Genet.">
        <title>Saccharomyces cerevisiae ribosomal protein L37 is encoded by duplicate genes that are differentially expressed.</title>
        <authorList>
            <person name="Tornow J."/>
            <person name="Santangelo G.M."/>
        </authorList>
    </citation>
    <scope>NUCLEOTIDE SEQUENCE [GENOMIC DNA]</scope>
</reference>
<reference key="2">
    <citation type="journal article" date="1996" name="Yeast">
        <title>Sequence and analysis of a 26.9 kb fragment from chromosome XV of the yeast Saccharomyces cerevisiae.</title>
        <authorList>
            <person name="Boyer J."/>
            <person name="Michaux G."/>
            <person name="Fairhead C."/>
            <person name="Gaillon L."/>
            <person name="Dujon B."/>
        </authorList>
    </citation>
    <scope>NUCLEOTIDE SEQUENCE [GENOMIC DNA]</scope>
    <source>
        <strain>ATCC 96604 / S288c / FY1679</strain>
    </source>
</reference>
<reference key="3">
    <citation type="journal article" date="1997" name="Nature">
        <title>The nucleotide sequence of Saccharomyces cerevisiae chromosome XV.</title>
        <authorList>
            <person name="Dujon B."/>
            <person name="Albermann K."/>
            <person name="Aldea M."/>
            <person name="Alexandraki D."/>
            <person name="Ansorge W."/>
            <person name="Arino J."/>
            <person name="Benes V."/>
            <person name="Bohn C."/>
            <person name="Bolotin-Fukuhara M."/>
            <person name="Bordonne R."/>
            <person name="Boyer J."/>
            <person name="Camasses A."/>
            <person name="Casamayor A."/>
            <person name="Casas C."/>
            <person name="Cheret G."/>
            <person name="Cziepluch C."/>
            <person name="Daignan-Fornier B."/>
            <person name="Dang V.-D."/>
            <person name="de Haan M."/>
            <person name="Delius H."/>
            <person name="Durand P."/>
            <person name="Fairhead C."/>
            <person name="Feldmann H."/>
            <person name="Gaillon L."/>
            <person name="Galisson F."/>
            <person name="Gamo F.-J."/>
            <person name="Gancedo C."/>
            <person name="Goffeau A."/>
            <person name="Goulding S.E."/>
            <person name="Grivell L.A."/>
            <person name="Habbig B."/>
            <person name="Hand N.J."/>
            <person name="Hani J."/>
            <person name="Hattenhorst U."/>
            <person name="Hebling U."/>
            <person name="Hernando Y."/>
            <person name="Herrero E."/>
            <person name="Heumann K."/>
            <person name="Hiesel R."/>
            <person name="Hilger F."/>
            <person name="Hofmann B."/>
            <person name="Hollenberg C.P."/>
            <person name="Hughes B."/>
            <person name="Jauniaux J.-C."/>
            <person name="Kalogeropoulos A."/>
            <person name="Katsoulou C."/>
            <person name="Kordes E."/>
            <person name="Lafuente M.J."/>
            <person name="Landt O."/>
            <person name="Louis E.J."/>
            <person name="Maarse A.C."/>
            <person name="Madania A."/>
            <person name="Mannhaupt G."/>
            <person name="Marck C."/>
            <person name="Martin R.P."/>
            <person name="Mewes H.-W."/>
            <person name="Michaux G."/>
            <person name="Paces V."/>
            <person name="Parle-McDermott A.G."/>
            <person name="Pearson B.M."/>
            <person name="Perrin A."/>
            <person name="Pettersson B."/>
            <person name="Poch O."/>
            <person name="Pohl T.M."/>
            <person name="Poirey R."/>
            <person name="Portetelle D."/>
            <person name="Pujol A."/>
            <person name="Purnelle B."/>
            <person name="Ramezani Rad M."/>
            <person name="Rechmann S."/>
            <person name="Schwager C."/>
            <person name="Schweizer M."/>
            <person name="Sor F."/>
            <person name="Sterky F."/>
            <person name="Tarassov I.A."/>
            <person name="Teodoru C."/>
            <person name="Tettelin H."/>
            <person name="Thierry A."/>
            <person name="Tobiasch E."/>
            <person name="Tzermia M."/>
            <person name="Uhlen M."/>
            <person name="Unseld M."/>
            <person name="Valens M."/>
            <person name="Vandenbol M."/>
            <person name="Vetter I."/>
            <person name="Vlcek C."/>
            <person name="Voet M."/>
            <person name="Volckaert G."/>
            <person name="Voss H."/>
            <person name="Wambutt R."/>
            <person name="Wedler H."/>
            <person name="Wiemann S."/>
            <person name="Winsor B."/>
            <person name="Wolfe K.H."/>
            <person name="Zollner A."/>
            <person name="Zumstein E."/>
            <person name="Kleine K."/>
        </authorList>
    </citation>
    <scope>NUCLEOTIDE SEQUENCE [LARGE SCALE GENOMIC DNA]</scope>
    <source>
        <strain>ATCC 204508 / S288c</strain>
    </source>
</reference>
<reference key="4">
    <citation type="journal article" date="2014" name="G3 (Bethesda)">
        <title>The reference genome sequence of Saccharomyces cerevisiae: Then and now.</title>
        <authorList>
            <person name="Engel S.R."/>
            <person name="Dietrich F.S."/>
            <person name="Fisk D.G."/>
            <person name="Binkley G."/>
            <person name="Balakrishnan R."/>
            <person name="Costanzo M.C."/>
            <person name="Dwight S.S."/>
            <person name="Hitz B.C."/>
            <person name="Karra K."/>
            <person name="Nash R.S."/>
            <person name="Weng S."/>
            <person name="Wong E.D."/>
            <person name="Lloyd P."/>
            <person name="Skrzypek M.S."/>
            <person name="Miyasato S.R."/>
            <person name="Simison M."/>
            <person name="Cherry J.M."/>
        </authorList>
    </citation>
    <scope>GENOME REANNOTATION</scope>
    <source>
        <strain>ATCC 204508 / S288c</strain>
    </source>
</reference>
<reference key="5">
    <citation type="journal article" date="1984" name="Mol. Gen. Genet.">
        <title>Yeast ribosomal proteins. VIII. Isolation of two proteins and sequence characterization of twenty-four proteins from cytoplasmic ribosomes.</title>
        <authorList>
            <person name="Otaka E."/>
            <person name="Higo K."/>
            <person name="Itoh T."/>
        </authorList>
    </citation>
    <scope>PARTIAL PROTEIN SEQUENCE OF 2-26</scope>
    <scope>CLEAVAGE OF INITIATOR METHIONINE</scope>
</reference>
<reference key="6">
    <citation type="journal article" date="1998" name="Yeast">
        <title>The list of cytoplasmic ribosomal proteins of Saccharomyces cerevisiae.</title>
        <authorList>
            <person name="Planta R.J."/>
            <person name="Mager W.H."/>
        </authorList>
    </citation>
    <scope>NOMENCLATURE</scope>
    <scope>SUBUNIT</scope>
</reference>
<reference key="7">
    <citation type="journal article" date="2003" name="Nature">
        <title>Global analysis of protein localization in budding yeast.</title>
        <authorList>
            <person name="Huh W.-K."/>
            <person name="Falvo J.V."/>
            <person name="Gerke L.C."/>
            <person name="Carroll A.S."/>
            <person name="Howson R.W."/>
            <person name="Weissman J.S."/>
            <person name="O'Shea E.K."/>
        </authorList>
    </citation>
    <scope>SUBCELLULAR LOCATION [LARGE SCALE ANALYSIS]</scope>
</reference>
<reference key="8">
    <citation type="journal article" date="2003" name="Nature">
        <title>Global analysis of protein expression in yeast.</title>
        <authorList>
            <person name="Ghaemmaghami S."/>
            <person name="Huh W.-K."/>
            <person name="Bower K."/>
            <person name="Howson R.W."/>
            <person name="Belle A."/>
            <person name="Dephoure N."/>
            <person name="O'Shea E.K."/>
            <person name="Weissman J.S."/>
        </authorList>
    </citation>
    <scope>LEVEL OF PROTEIN EXPRESSION [LARGE SCALE ANALYSIS]</scope>
</reference>
<reference key="9">
    <citation type="journal article" date="2011" name="Science">
        <title>The structure of the eukaryotic ribosome at 3.0 A resolution.</title>
        <authorList>
            <person name="Ben-Shem A."/>
            <person name="Garreau de Loubresse N."/>
            <person name="Melnikov S."/>
            <person name="Jenner L."/>
            <person name="Yusupova G."/>
            <person name="Yusupov M."/>
        </authorList>
    </citation>
    <scope>SUBUNIT</scope>
    <scope>SUBCELLULAR LOCATION</scope>
</reference>
<reference key="10">
    <citation type="journal article" date="2014" name="Curr. Opin. Struct. Biol.">
        <title>A new system for naming ribosomal proteins.</title>
        <authorList>
            <person name="Ban N."/>
            <person name="Beckmann R."/>
            <person name="Cate J.H.D."/>
            <person name="Dinman J.D."/>
            <person name="Dragon F."/>
            <person name="Ellis S.R."/>
            <person name="Lafontaine D.L.J."/>
            <person name="Lindahl L."/>
            <person name="Liljas A."/>
            <person name="Lipton J.M."/>
            <person name="McAlear M.A."/>
            <person name="Moore P.B."/>
            <person name="Noller H.F."/>
            <person name="Ortega J."/>
            <person name="Panse V.G."/>
            <person name="Ramakrishnan V."/>
            <person name="Spahn C.M.T."/>
            <person name="Steitz T.A."/>
            <person name="Tchorzewski M."/>
            <person name="Tollervey D."/>
            <person name="Warren A.J."/>
            <person name="Williamson J.R."/>
            <person name="Wilson D."/>
            <person name="Yonath A."/>
            <person name="Yusupov M."/>
        </authorList>
    </citation>
    <scope>NOMENCLATURE</scope>
</reference>
<feature type="initiator methionine" description="Removed" evidence="4">
    <location>
        <position position="1"/>
    </location>
</feature>
<feature type="chain" id="PRO_0000192808" description="Large ribosomal subunit protein eL33B">
    <location>
        <begin position="2"/>
        <end position="107"/>
    </location>
</feature>
<feature type="modified residue" description="N-acetylalanine; partial" evidence="1">
    <location>
        <position position="2"/>
    </location>
</feature>
<feature type="cross-link" description="Glycyl lysine isopeptide (Lys-Gly) (interchain with G-Cter in ubiquitin)" evidence="1">
    <location>
        <position position="47"/>
    </location>
</feature>
<feature type="sequence conflict" description="In Ref. 5; AA sequence." evidence="8" ref="5">
    <original>N</original>
    <variation>D</variation>
    <location>
        <position position="24"/>
    </location>
</feature>
<dbReference type="EMBL" id="L23923">
    <property type="protein sequence ID" value="AAA35006.1"/>
    <property type="molecule type" value="Genomic_DNA"/>
</dbReference>
<dbReference type="EMBL" id="Z75142">
    <property type="protein sequence ID" value="CAA99454.1"/>
    <property type="molecule type" value="Genomic_DNA"/>
</dbReference>
<dbReference type="EMBL" id="BK006948">
    <property type="protein sequence ID" value="DAA11004.1"/>
    <property type="molecule type" value="Genomic_DNA"/>
</dbReference>
<dbReference type="PIR" id="S44069">
    <property type="entry name" value="S44069"/>
</dbReference>
<dbReference type="RefSeq" id="NP_014877.3">
    <property type="nucleotide sequence ID" value="NM_001183653.3"/>
</dbReference>
<dbReference type="SMR" id="P41056"/>
<dbReference type="BioGRID" id="34627">
    <property type="interactions" value="171"/>
</dbReference>
<dbReference type="ComplexPortal" id="CPX-1601">
    <property type="entry name" value="60S cytosolic large ribosomal subunit"/>
</dbReference>
<dbReference type="FunCoup" id="P41056">
    <property type="interactions" value="883"/>
</dbReference>
<dbReference type="IntAct" id="P41056">
    <property type="interactions" value="36"/>
</dbReference>
<dbReference type="MINT" id="P41056"/>
<dbReference type="STRING" id="4932.YOR234C"/>
<dbReference type="iPTMnet" id="P41056"/>
<dbReference type="PaxDb" id="4932-YOR234C"/>
<dbReference type="PeptideAtlas" id="P41056"/>
<dbReference type="TopDownProteomics" id="P41056"/>
<dbReference type="EnsemblFungi" id="YOR234C_mRNA">
    <property type="protein sequence ID" value="YOR234C"/>
    <property type="gene ID" value="YOR234C"/>
</dbReference>
<dbReference type="GeneID" id="854409"/>
<dbReference type="KEGG" id="sce:YOR234C"/>
<dbReference type="AGR" id="SGD:S000005760"/>
<dbReference type="SGD" id="S000005760">
    <property type="gene designation" value="RPL33B"/>
</dbReference>
<dbReference type="VEuPathDB" id="FungiDB:YOR234C"/>
<dbReference type="eggNOG" id="KOG0887">
    <property type="taxonomic scope" value="Eukaryota"/>
</dbReference>
<dbReference type="GeneTree" id="ENSGT00390000016972"/>
<dbReference type="HOGENOM" id="CLU_100745_2_0_1"/>
<dbReference type="InParanoid" id="P41056"/>
<dbReference type="OMA" id="DETRVIW"/>
<dbReference type="OrthoDB" id="1166329at2759"/>
<dbReference type="BioCyc" id="YEAST:G3O-33732-MONOMER"/>
<dbReference type="BioGRID-ORCS" id="854409">
    <property type="hits" value="6 hits in 10 CRISPR screens"/>
</dbReference>
<dbReference type="PRO" id="PR:P41056"/>
<dbReference type="Proteomes" id="UP000002311">
    <property type="component" value="Chromosome XV"/>
</dbReference>
<dbReference type="RNAct" id="P41056">
    <property type="molecule type" value="protein"/>
</dbReference>
<dbReference type="GO" id="GO:0005829">
    <property type="term" value="C:cytosol"/>
    <property type="evidence" value="ECO:0000304"/>
    <property type="project" value="Reactome"/>
</dbReference>
<dbReference type="GO" id="GO:0022625">
    <property type="term" value="C:cytosolic large ribosomal subunit"/>
    <property type="evidence" value="ECO:0000314"/>
    <property type="project" value="SGD"/>
</dbReference>
<dbReference type="GO" id="GO:0003735">
    <property type="term" value="F:structural constituent of ribosome"/>
    <property type="evidence" value="ECO:0000314"/>
    <property type="project" value="SGD"/>
</dbReference>
<dbReference type="GO" id="GO:0002181">
    <property type="term" value="P:cytoplasmic translation"/>
    <property type="evidence" value="ECO:0000314"/>
    <property type="project" value="SGD"/>
</dbReference>
<dbReference type="GO" id="GO:0042273">
    <property type="term" value="P:ribosomal large subunit biogenesis"/>
    <property type="evidence" value="ECO:0000318"/>
    <property type="project" value="GO_Central"/>
</dbReference>
<dbReference type="FunFam" id="2.40.10.190:FF:000001">
    <property type="entry name" value="60S ribosomal protein L35a"/>
    <property type="match status" value="1"/>
</dbReference>
<dbReference type="Gene3D" id="2.40.10.190">
    <property type="entry name" value="translation elongation factor selb, chain A, domain 4"/>
    <property type="match status" value="1"/>
</dbReference>
<dbReference type="HAMAP" id="MF_00573">
    <property type="entry name" value="Ribosomal_eL33"/>
    <property type="match status" value="1"/>
</dbReference>
<dbReference type="InterPro" id="IPR001780">
    <property type="entry name" value="Ribosomal_eL33"/>
</dbReference>
<dbReference type="InterPro" id="IPR018266">
    <property type="entry name" value="Ribosomal_eL33_CS"/>
</dbReference>
<dbReference type="InterPro" id="IPR038661">
    <property type="entry name" value="Ribosomal_eL33_sf"/>
</dbReference>
<dbReference type="InterPro" id="IPR009000">
    <property type="entry name" value="Transl_B-barrel_sf"/>
</dbReference>
<dbReference type="PANTHER" id="PTHR10902">
    <property type="entry name" value="60S RIBOSOMAL PROTEIN L35A"/>
    <property type="match status" value="1"/>
</dbReference>
<dbReference type="Pfam" id="PF01247">
    <property type="entry name" value="Ribosomal_L35Ae"/>
    <property type="match status" value="1"/>
</dbReference>
<dbReference type="SUPFAM" id="SSF50447">
    <property type="entry name" value="Translation proteins"/>
    <property type="match status" value="1"/>
</dbReference>
<dbReference type="PROSITE" id="PS01105">
    <property type="entry name" value="RIBOSOMAL_L35AE"/>
    <property type="match status" value="1"/>
</dbReference>